<protein>
    <recommendedName>
        <fullName evidence="1">DNA-directed RNA polymerase subunit alpha</fullName>
        <shortName evidence="1">RNAP subunit alpha</shortName>
        <ecNumber evidence="1">2.7.7.6</ecNumber>
    </recommendedName>
    <alternativeName>
        <fullName evidence="1">RNA polymerase subunit alpha</fullName>
    </alternativeName>
    <alternativeName>
        <fullName evidence="1">Transcriptase subunit alpha</fullName>
    </alternativeName>
</protein>
<feature type="chain" id="PRO_0000296800" description="DNA-directed RNA polymerase subunit alpha">
    <location>
        <begin position="1"/>
        <end position="351"/>
    </location>
</feature>
<feature type="region of interest" description="Alpha N-terminal domain (alpha-NTD)" evidence="1">
    <location>
        <begin position="1"/>
        <end position="236"/>
    </location>
</feature>
<feature type="region of interest" description="Alpha C-terminal domain (alpha-CTD)" evidence="1">
    <location>
        <begin position="256"/>
        <end position="351"/>
    </location>
</feature>
<reference key="1">
    <citation type="journal article" date="2009" name="J. Bacteriol.">
        <title>Complete genome sequence of Erythrobacter litoralis HTCC2594.</title>
        <authorList>
            <person name="Oh H.M."/>
            <person name="Giovannoni S.J."/>
            <person name="Ferriera S."/>
            <person name="Johnson J."/>
            <person name="Cho J.C."/>
        </authorList>
    </citation>
    <scope>NUCLEOTIDE SEQUENCE [LARGE SCALE GENOMIC DNA]</scope>
    <source>
        <strain>HTCC2594</strain>
    </source>
</reference>
<organism>
    <name type="scientific">Erythrobacter litoralis (strain HTCC2594)</name>
    <dbReference type="NCBI Taxonomy" id="314225"/>
    <lineage>
        <taxon>Bacteria</taxon>
        <taxon>Pseudomonadati</taxon>
        <taxon>Pseudomonadota</taxon>
        <taxon>Alphaproteobacteria</taxon>
        <taxon>Sphingomonadales</taxon>
        <taxon>Erythrobacteraceae</taxon>
        <taxon>Erythrobacter/Porphyrobacter group</taxon>
        <taxon>Erythrobacter</taxon>
    </lineage>
</organism>
<keyword id="KW-0240">DNA-directed RNA polymerase</keyword>
<keyword id="KW-0548">Nucleotidyltransferase</keyword>
<keyword id="KW-1185">Reference proteome</keyword>
<keyword id="KW-0804">Transcription</keyword>
<keyword id="KW-0808">Transferase</keyword>
<comment type="function">
    <text evidence="1">DNA-dependent RNA polymerase catalyzes the transcription of DNA into RNA using the four ribonucleoside triphosphates as substrates.</text>
</comment>
<comment type="catalytic activity">
    <reaction evidence="1">
        <text>RNA(n) + a ribonucleoside 5'-triphosphate = RNA(n+1) + diphosphate</text>
        <dbReference type="Rhea" id="RHEA:21248"/>
        <dbReference type="Rhea" id="RHEA-COMP:14527"/>
        <dbReference type="Rhea" id="RHEA-COMP:17342"/>
        <dbReference type="ChEBI" id="CHEBI:33019"/>
        <dbReference type="ChEBI" id="CHEBI:61557"/>
        <dbReference type="ChEBI" id="CHEBI:140395"/>
        <dbReference type="EC" id="2.7.7.6"/>
    </reaction>
</comment>
<comment type="subunit">
    <text evidence="1">Homodimer. The RNAP catalytic core consists of 2 alpha, 1 beta, 1 beta' and 1 omega subunit. When a sigma factor is associated with the core the holoenzyme is formed, which can initiate transcription.</text>
</comment>
<comment type="domain">
    <text evidence="1">The N-terminal domain is essential for RNAP assembly and basal transcription, whereas the C-terminal domain is involved in interaction with transcriptional regulators and with upstream promoter elements.</text>
</comment>
<comment type="similarity">
    <text evidence="1">Belongs to the RNA polymerase alpha chain family.</text>
</comment>
<dbReference type="EC" id="2.7.7.6" evidence="1"/>
<dbReference type="EMBL" id="CP000157">
    <property type="protein sequence ID" value="ABC63704.1"/>
    <property type="molecule type" value="Genomic_DNA"/>
</dbReference>
<dbReference type="RefSeq" id="WP_011414536.1">
    <property type="nucleotide sequence ID" value="NC_007722.1"/>
</dbReference>
<dbReference type="SMR" id="Q2N9D7"/>
<dbReference type="STRING" id="314225.ELI_08060"/>
<dbReference type="KEGG" id="eli:ELI_08060"/>
<dbReference type="eggNOG" id="COG0202">
    <property type="taxonomic scope" value="Bacteria"/>
</dbReference>
<dbReference type="HOGENOM" id="CLU_053084_0_0_5"/>
<dbReference type="OrthoDB" id="9805706at2"/>
<dbReference type="Proteomes" id="UP000008808">
    <property type="component" value="Chromosome"/>
</dbReference>
<dbReference type="GO" id="GO:0005737">
    <property type="term" value="C:cytoplasm"/>
    <property type="evidence" value="ECO:0007669"/>
    <property type="project" value="UniProtKB-ARBA"/>
</dbReference>
<dbReference type="GO" id="GO:0000428">
    <property type="term" value="C:DNA-directed RNA polymerase complex"/>
    <property type="evidence" value="ECO:0007669"/>
    <property type="project" value="UniProtKB-KW"/>
</dbReference>
<dbReference type="GO" id="GO:0003677">
    <property type="term" value="F:DNA binding"/>
    <property type="evidence" value="ECO:0007669"/>
    <property type="project" value="UniProtKB-UniRule"/>
</dbReference>
<dbReference type="GO" id="GO:0003899">
    <property type="term" value="F:DNA-directed RNA polymerase activity"/>
    <property type="evidence" value="ECO:0007669"/>
    <property type="project" value="UniProtKB-UniRule"/>
</dbReference>
<dbReference type="GO" id="GO:0046983">
    <property type="term" value="F:protein dimerization activity"/>
    <property type="evidence" value="ECO:0007669"/>
    <property type="project" value="InterPro"/>
</dbReference>
<dbReference type="GO" id="GO:0006351">
    <property type="term" value="P:DNA-templated transcription"/>
    <property type="evidence" value="ECO:0007669"/>
    <property type="project" value="UniProtKB-UniRule"/>
</dbReference>
<dbReference type="CDD" id="cd06928">
    <property type="entry name" value="RNAP_alpha_NTD"/>
    <property type="match status" value="1"/>
</dbReference>
<dbReference type="FunFam" id="1.10.150.20:FF:000001">
    <property type="entry name" value="DNA-directed RNA polymerase subunit alpha"/>
    <property type="match status" value="1"/>
</dbReference>
<dbReference type="FunFam" id="2.170.120.12:FF:000001">
    <property type="entry name" value="DNA-directed RNA polymerase subunit alpha"/>
    <property type="match status" value="1"/>
</dbReference>
<dbReference type="Gene3D" id="1.10.150.20">
    <property type="entry name" value="5' to 3' exonuclease, C-terminal subdomain"/>
    <property type="match status" value="1"/>
</dbReference>
<dbReference type="Gene3D" id="2.170.120.12">
    <property type="entry name" value="DNA-directed RNA polymerase, insert domain"/>
    <property type="match status" value="1"/>
</dbReference>
<dbReference type="Gene3D" id="3.30.1360.10">
    <property type="entry name" value="RNA polymerase, RBP11-like subunit"/>
    <property type="match status" value="1"/>
</dbReference>
<dbReference type="HAMAP" id="MF_00059">
    <property type="entry name" value="RNApol_bact_RpoA"/>
    <property type="match status" value="1"/>
</dbReference>
<dbReference type="InterPro" id="IPR011262">
    <property type="entry name" value="DNA-dir_RNA_pol_insert"/>
</dbReference>
<dbReference type="InterPro" id="IPR011263">
    <property type="entry name" value="DNA-dir_RNA_pol_RpoA/D/Rpb3"/>
</dbReference>
<dbReference type="InterPro" id="IPR011773">
    <property type="entry name" value="DNA-dir_RpoA"/>
</dbReference>
<dbReference type="InterPro" id="IPR036603">
    <property type="entry name" value="RBP11-like"/>
</dbReference>
<dbReference type="InterPro" id="IPR011260">
    <property type="entry name" value="RNAP_asu_C"/>
</dbReference>
<dbReference type="InterPro" id="IPR036643">
    <property type="entry name" value="RNApol_insert_sf"/>
</dbReference>
<dbReference type="NCBIfam" id="NF003513">
    <property type="entry name" value="PRK05182.1-2"/>
    <property type="match status" value="1"/>
</dbReference>
<dbReference type="NCBIfam" id="NF003519">
    <property type="entry name" value="PRK05182.2-5"/>
    <property type="match status" value="1"/>
</dbReference>
<dbReference type="NCBIfam" id="TIGR02027">
    <property type="entry name" value="rpoA"/>
    <property type="match status" value="1"/>
</dbReference>
<dbReference type="Pfam" id="PF01000">
    <property type="entry name" value="RNA_pol_A_bac"/>
    <property type="match status" value="1"/>
</dbReference>
<dbReference type="Pfam" id="PF03118">
    <property type="entry name" value="RNA_pol_A_CTD"/>
    <property type="match status" value="1"/>
</dbReference>
<dbReference type="Pfam" id="PF01193">
    <property type="entry name" value="RNA_pol_L"/>
    <property type="match status" value="1"/>
</dbReference>
<dbReference type="SMART" id="SM00662">
    <property type="entry name" value="RPOLD"/>
    <property type="match status" value="1"/>
</dbReference>
<dbReference type="SUPFAM" id="SSF47789">
    <property type="entry name" value="C-terminal domain of RNA polymerase alpha subunit"/>
    <property type="match status" value="1"/>
</dbReference>
<dbReference type="SUPFAM" id="SSF56553">
    <property type="entry name" value="Insert subdomain of RNA polymerase alpha subunit"/>
    <property type="match status" value="1"/>
</dbReference>
<dbReference type="SUPFAM" id="SSF55257">
    <property type="entry name" value="RBP11-like subunits of RNA polymerase"/>
    <property type="match status" value="1"/>
</dbReference>
<evidence type="ECO:0000255" key="1">
    <source>
        <dbReference type="HAMAP-Rule" id="MF_00059"/>
    </source>
</evidence>
<accession>Q2N9D7</accession>
<gene>
    <name evidence="1" type="primary">rpoA</name>
    <name type="ordered locus">ELI_08060</name>
</gene>
<name>RPOA_ERYLH</name>
<proteinExistence type="inferred from homology"/>
<sequence>MSVNTKNWQELKKPTQLDVKESSDKARKATFIAEPLERGYGLTLGNALRRVLLASLQGAAITSIKIENVLHEFSSLAGVREDVTDIVLNVKQIALKMEGEGPKRLQLSATGPAEVKAGDIAVSGDIEVMNKDLVICHLDEGATLNMELTADIGSGYVPAVQNRPADAPIGLIPVDSLYSPIRQVSYKVEKARVGQELDFDKLSLTIETDGTVTPEDAVAYAARILQDQLTLFVHFEDGIPQPQSAMIGVAAEPQQDDANQLNRYLLKKVDELELSVRSANCLKNDNIIYIGDLVQKTEAEMLRTPNFGRKSLNEIKEVLSSMGLRLGMDIPGWPPENIEEMAKKLEQELLG</sequence>